<protein>
    <recommendedName>
        <fullName evidence="1">Large ribosomal subunit protein uL6</fullName>
    </recommendedName>
    <alternativeName>
        <fullName evidence="2">50S ribosomal protein L6</fullName>
    </alternativeName>
</protein>
<organism>
    <name type="scientific">Corynebacterium glutamicum (strain R)</name>
    <dbReference type="NCBI Taxonomy" id="340322"/>
    <lineage>
        <taxon>Bacteria</taxon>
        <taxon>Bacillati</taxon>
        <taxon>Actinomycetota</taxon>
        <taxon>Actinomycetes</taxon>
        <taxon>Mycobacteriales</taxon>
        <taxon>Corynebacteriaceae</taxon>
        <taxon>Corynebacterium</taxon>
    </lineage>
</organism>
<reference key="1">
    <citation type="journal article" date="2007" name="Microbiology">
        <title>Comparative analysis of the Corynebacterium glutamicum group and complete genome sequence of strain R.</title>
        <authorList>
            <person name="Yukawa H."/>
            <person name="Omumasaba C.A."/>
            <person name="Nonaka H."/>
            <person name="Kos P."/>
            <person name="Okai N."/>
            <person name="Suzuki N."/>
            <person name="Suda M."/>
            <person name="Tsuge Y."/>
            <person name="Watanabe J."/>
            <person name="Ikeda Y."/>
            <person name="Vertes A.A."/>
            <person name="Inui M."/>
        </authorList>
    </citation>
    <scope>NUCLEOTIDE SEQUENCE [LARGE SCALE GENOMIC DNA]</scope>
    <source>
        <strain>R</strain>
    </source>
</reference>
<accession>A4QBL1</accession>
<dbReference type="EMBL" id="AP009044">
    <property type="protein sequence ID" value="BAF53608.1"/>
    <property type="molecule type" value="Genomic_DNA"/>
</dbReference>
<dbReference type="RefSeq" id="WP_003860588.1">
    <property type="nucleotide sequence ID" value="NC_009342.1"/>
</dbReference>
<dbReference type="SMR" id="A4QBL1"/>
<dbReference type="GeneID" id="1021537"/>
<dbReference type="KEGG" id="cgt:cgR_0637"/>
<dbReference type="HOGENOM" id="CLU_065464_1_2_11"/>
<dbReference type="PhylomeDB" id="A4QBL1"/>
<dbReference type="Proteomes" id="UP000006698">
    <property type="component" value="Chromosome"/>
</dbReference>
<dbReference type="GO" id="GO:0022625">
    <property type="term" value="C:cytosolic large ribosomal subunit"/>
    <property type="evidence" value="ECO:0007669"/>
    <property type="project" value="TreeGrafter"/>
</dbReference>
<dbReference type="GO" id="GO:0019843">
    <property type="term" value="F:rRNA binding"/>
    <property type="evidence" value="ECO:0007669"/>
    <property type="project" value="UniProtKB-UniRule"/>
</dbReference>
<dbReference type="GO" id="GO:0003735">
    <property type="term" value="F:structural constituent of ribosome"/>
    <property type="evidence" value="ECO:0007669"/>
    <property type="project" value="InterPro"/>
</dbReference>
<dbReference type="GO" id="GO:0002181">
    <property type="term" value="P:cytoplasmic translation"/>
    <property type="evidence" value="ECO:0007669"/>
    <property type="project" value="TreeGrafter"/>
</dbReference>
<dbReference type="FunFam" id="3.90.930.12:FF:000001">
    <property type="entry name" value="50S ribosomal protein L6"/>
    <property type="match status" value="1"/>
</dbReference>
<dbReference type="FunFam" id="3.90.930.12:FF:000002">
    <property type="entry name" value="50S ribosomal protein L6"/>
    <property type="match status" value="1"/>
</dbReference>
<dbReference type="Gene3D" id="3.90.930.12">
    <property type="entry name" value="Ribosomal protein L6, alpha-beta domain"/>
    <property type="match status" value="2"/>
</dbReference>
<dbReference type="HAMAP" id="MF_01365_B">
    <property type="entry name" value="Ribosomal_uL6_B"/>
    <property type="match status" value="1"/>
</dbReference>
<dbReference type="InterPro" id="IPR000702">
    <property type="entry name" value="Ribosomal_uL6-like"/>
</dbReference>
<dbReference type="InterPro" id="IPR036789">
    <property type="entry name" value="Ribosomal_uL6-like_a/b-dom_sf"/>
</dbReference>
<dbReference type="InterPro" id="IPR020040">
    <property type="entry name" value="Ribosomal_uL6_a/b-dom"/>
</dbReference>
<dbReference type="InterPro" id="IPR019906">
    <property type="entry name" value="Ribosomal_uL6_bac-type"/>
</dbReference>
<dbReference type="NCBIfam" id="TIGR03654">
    <property type="entry name" value="L6_bact"/>
    <property type="match status" value="1"/>
</dbReference>
<dbReference type="PANTHER" id="PTHR11655">
    <property type="entry name" value="60S/50S RIBOSOMAL PROTEIN L6/L9"/>
    <property type="match status" value="1"/>
</dbReference>
<dbReference type="PANTHER" id="PTHR11655:SF14">
    <property type="entry name" value="LARGE RIBOSOMAL SUBUNIT PROTEIN UL6M"/>
    <property type="match status" value="1"/>
</dbReference>
<dbReference type="Pfam" id="PF00347">
    <property type="entry name" value="Ribosomal_L6"/>
    <property type="match status" value="2"/>
</dbReference>
<dbReference type="PIRSF" id="PIRSF002162">
    <property type="entry name" value="Ribosomal_L6"/>
    <property type="match status" value="1"/>
</dbReference>
<dbReference type="PRINTS" id="PR00059">
    <property type="entry name" value="RIBOSOMALL6"/>
</dbReference>
<dbReference type="SUPFAM" id="SSF56053">
    <property type="entry name" value="Ribosomal protein L6"/>
    <property type="match status" value="2"/>
</dbReference>
<feature type="chain" id="PRO_1000055224" description="Large ribosomal subunit protein uL6">
    <location>
        <begin position="1"/>
        <end position="178"/>
    </location>
</feature>
<gene>
    <name evidence="1" type="primary">rplF</name>
    <name type="ordered locus">cgR_0637</name>
</gene>
<proteinExistence type="inferred from homology"/>
<evidence type="ECO:0000255" key="1">
    <source>
        <dbReference type="HAMAP-Rule" id="MF_01365"/>
    </source>
</evidence>
<evidence type="ECO:0000305" key="2"/>
<comment type="function">
    <text evidence="1">This protein binds to the 23S rRNA, and is important in its secondary structure. It is located near the subunit interface in the base of the L7/L12 stalk, and near the tRNA binding site of the peptidyltransferase center.</text>
</comment>
<comment type="subunit">
    <text evidence="1">Part of the 50S ribosomal subunit.</text>
</comment>
<comment type="similarity">
    <text evidence="1">Belongs to the universal ribosomal protein uL6 family.</text>
</comment>
<sequence>MSRIGKEPITIPSGVETKIDGQLVEVKGPKGTLNVNVPEPISVAVEDGKIVVTRPDDHRTNRSLHGLSRSLVNNLVVGVTEGYTIKMEIFGVGYRVALKGKDLEFSLGYSHPVLIEASEGITFAVDGNTKLSVSGIDKQKVGQVAAVIRRLRKDDPYKGKGIRYEGEQIRRKVGKTGK</sequence>
<keyword id="KW-0687">Ribonucleoprotein</keyword>
<keyword id="KW-0689">Ribosomal protein</keyword>
<keyword id="KW-0694">RNA-binding</keyword>
<keyword id="KW-0699">rRNA-binding</keyword>
<name>RL6_CORGB</name>